<sequence>MAKGIREKIKLVSSAGTGHFYTTTKNKRTKPEKLELKKFDPVVRQHVIYKEAKIK</sequence>
<organism>
    <name type="scientific">Escherichia coli O45:K1 (strain S88 / ExPEC)</name>
    <dbReference type="NCBI Taxonomy" id="585035"/>
    <lineage>
        <taxon>Bacteria</taxon>
        <taxon>Pseudomonadati</taxon>
        <taxon>Pseudomonadota</taxon>
        <taxon>Gammaproteobacteria</taxon>
        <taxon>Enterobacterales</taxon>
        <taxon>Enterobacteriaceae</taxon>
        <taxon>Escherichia</taxon>
    </lineage>
</organism>
<gene>
    <name evidence="1" type="primary">rpmG</name>
    <name type="ordered locus">ECS88_4050</name>
</gene>
<evidence type="ECO:0000255" key="1">
    <source>
        <dbReference type="HAMAP-Rule" id="MF_00294"/>
    </source>
</evidence>
<evidence type="ECO:0000305" key="2"/>
<feature type="chain" id="PRO_1000119437" description="Large ribosomal subunit protein bL33">
    <location>
        <begin position="1"/>
        <end position="55"/>
    </location>
</feature>
<name>RL33_ECO45</name>
<accession>B7MFJ7</accession>
<protein>
    <recommendedName>
        <fullName evidence="1">Large ribosomal subunit protein bL33</fullName>
    </recommendedName>
    <alternativeName>
        <fullName evidence="2">50S ribosomal protein L33</fullName>
    </alternativeName>
</protein>
<proteinExistence type="inferred from homology"/>
<dbReference type="EMBL" id="CU928161">
    <property type="protein sequence ID" value="CAR05259.1"/>
    <property type="molecule type" value="Genomic_DNA"/>
</dbReference>
<dbReference type="RefSeq" id="WP_001051798.1">
    <property type="nucleotide sequence ID" value="NC_011742.1"/>
</dbReference>
<dbReference type="EMDB" id="EMD-7970"/>
<dbReference type="EMDB" id="EMD-8826"/>
<dbReference type="EMDB" id="EMD-8829"/>
<dbReference type="SMR" id="B7MFJ7"/>
<dbReference type="IntAct" id="B7MFJ7">
    <property type="interactions" value="1"/>
</dbReference>
<dbReference type="GeneID" id="97607673"/>
<dbReference type="KEGG" id="ecz:ECS88_4050"/>
<dbReference type="HOGENOM" id="CLU_190949_1_1_6"/>
<dbReference type="Proteomes" id="UP000000747">
    <property type="component" value="Chromosome"/>
</dbReference>
<dbReference type="GO" id="GO:0022625">
    <property type="term" value="C:cytosolic large ribosomal subunit"/>
    <property type="evidence" value="ECO:0007669"/>
    <property type="project" value="TreeGrafter"/>
</dbReference>
<dbReference type="GO" id="GO:0003735">
    <property type="term" value="F:structural constituent of ribosome"/>
    <property type="evidence" value="ECO:0007669"/>
    <property type="project" value="InterPro"/>
</dbReference>
<dbReference type="GO" id="GO:0006412">
    <property type="term" value="P:translation"/>
    <property type="evidence" value="ECO:0007669"/>
    <property type="project" value="UniProtKB-UniRule"/>
</dbReference>
<dbReference type="FunFam" id="2.20.28.120:FF:000001">
    <property type="entry name" value="50S ribosomal protein L33"/>
    <property type="match status" value="1"/>
</dbReference>
<dbReference type="Gene3D" id="2.20.28.120">
    <property type="entry name" value="Ribosomal protein L33"/>
    <property type="match status" value="1"/>
</dbReference>
<dbReference type="HAMAP" id="MF_00294">
    <property type="entry name" value="Ribosomal_bL33"/>
    <property type="match status" value="1"/>
</dbReference>
<dbReference type="InterPro" id="IPR001705">
    <property type="entry name" value="Ribosomal_bL33"/>
</dbReference>
<dbReference type="InterPro" id="IPR018264">
    <property type="entry name" value="Ribosomal_bL33_CS"/>
</dbReference>
<dbReference type="InterPro" id="IPR038584">
    <property type="entry name" value="Ribosomal_bL33_sf"/>
</dbReference>
<dbReference type="InterPro" id="IPR011332">
    <property type="entry name" value="Ribosomal_zn-bd"/>
</dbReference>
<dbReference type="NCBIfam" id="NF001860">
    <property type="entry name" value="PRK00595.1"/>
    <property type="match status" value="1"/>
</dbReference>
<dbReference type="NCBIfam" id="TIGR01023">
    <property type="entry name" value="rpmG_bact"/>
    <property type="match status" value="1"/>
</dbReference>
<dbReference type="PANTHER" id="PTHR15238">
    <property type="entry name" value="54S RIBOSOMAL PROTEIN L39, MITOCHONDRIAL"/>
    <property type="match status" value="1"/>
</dbReference>
<dbReference type="PANTHER" id="PTHR15238:SF1">
    <property type="entry name" value="LARGE RIBOSOMAL SUBUNIT PROTEIN BL33M"/>
    <property type="match status" value="1"/>
</dbReference>
<dbReference type="Pfam" id="PF00471">
    <property type="entry name" value="Ribosomal_L33"/>
    <property type="match status" value="1"/>
</dbReference>
<dbReference type="SUPFAM" id="SSF57829">
    <property type="entry name" value="Zn-binding ribosomal proteins"/>
    <property type="match status" value="1"/>
</dbReference>
<dbReference type="PROSITE" id="PS00582">
    <property type="entry name" value="RIBOSOMAL_L33"/>
    <property type="match status" value="1"/>
</dbReference>
<keyword id="KW-1185">Reference proteome</keyword>
<keyword id="KW-0687">Ribonucleoprotein</keyword>
<keyword id="KW-0689">Ribosomal protein</keyword>
<reference key="1">
    <citation type="journal article" date="2009" name="PLoS Genet.">
        <title>Organised genome dynamics in the Escherichia coli species results in highly diverse adaptive paths.</title>
        <authorList>
            <person name="Touchon M."/>
            <person name="Hoede C."/>
            <person name="Tenaillon O."/>
            <person name="Barbe V."/>
            <person name="Baeriswyl S."/>
            <person name="Bidet P."/>
            <person name="Bingen E."/>
            <person name="Bonacorsi S."/>
            <person name="Bouchier C."/>
            <person name="Bouvet O."/>
            <person name="Calteau A."/>
            <person name="Chiapello H."/>
            <person name="Clermont O."/>
            <person name="Cruveiller S."/>
            <person name="Danchin A."/>
            <person name="Diard M."/>
            <person name="Dossat C."/>
            <person name="Karoui M.E."/>
            <person name="Frapy E."/>
            <person name="Garry L."/>
            <person name="Ghigo J.M."/>
            <person name="Gilles A.M."/>
            <person name="Johnson J."/>
            <person name="Le Bouguenec C."/>
            <person name="Lescat M."/>
            <person name="Mangenot S."/>
            <person name="Martinez-Jehanne V."/>
            <person name="Matic I."/>
            <person name="Nassif X."/>
            <person name="Oztas S."/>
            <person name="Petit M.A."/>
            <person name="Pichon C."/>
            <person name="Rouy Z."/>
            <person name="Ruf C.S."/>
            <person name="Schneider D."/>
            <person name="Tourret J."/>
            <person name="Vacherie B."/>
            <person name="Vallenet D."/>
            <person name="Medigue C."/>
            <person name="Rocha E.P.C."/>
            <person name="Denamur E."/>
        </authorList>
    </citation>
    <scope>NUCLEOTIDE SEQUENCE [LARGE SCALE GENOMIC DNA]</scope>
    <source>
        <strain>S88 / ExPEC</strain>
    </source>
</reference>
<comment type="similarity">
    <text evidence="1">Belongs to the bacterial ribosomal protein bL33 family.</text>
</comment>